<comment type="function">
    <text>Core component of nucleosome. Nucleosomes wrap and compact DNA into chromatin, limiting DNA accessibility to the cellular machineries which require DNA as a template. Histones thereby play a central role in transcription regulation, DNA repair, DNA replication and chromosomal stability. DNA accessibility is regulated via a complex set of post-translational modifications of histones, also called histone code, and nucleosome remodeling.</text>
</comment>
<comment type="subunit">
    <text>The nucleosome is a histone octamer containing two molecules each of H2A, H2B, H3 and H4 assembled in one H3-H4 heterotetramer and two H2A-H2B heterodimers. The octamer wraps approximately 147 bp of DNA.</text>
</comment>
<comment type="subcellular location">
    <subcellularLocation>
        <location evidence="1">Nucleus</location>
    </subcellularLocation>
    <subcellularLocation>
        <location evidence="1">Chromosome</location>
    </subcellularLocation>
</comment>
<comment type="PTM">
    <text evidence="1">Can be acetylated to form H2BK6ac and H2BK33ac.</text>
</comment>
<comment type="PTM">
    <text evidence="1">Monoubiquitinated by BRE1 to form H2BK143ub1 and deubiquitinated by UBP26. Required for heterochromatic histone H3 di- and trimethylation at H3K4me. May give a specific tag for epigenetic transcriptional activation (By similarity).</text>
</comment>
<comment type="similarity">
    <text evidence="3">Belongs to the histone H2B family.</text>
</comment>
<comment type="caution">
    <text evidence="3">To ensure consistency between histone entries, we follow the 'Brno' nomenclature for histone modifications, with positions referring to those used in the literature for the 'closest' model organism. Due to slight variations in histone sequences between organisms and to the presence of initiator methionine in UniProtKB/Swiss-Prot sequences, the actual positions of modified amino acids in the sequence generally differ. In this entry the following conventions are used: H2BK6ac = acetylated Lys-7; H2BK33ac = acetylated Lys-37; H2BK143ub1 = monoubiquitinated Lys-149.</text>
</comment>
<evidence type="ECO:0000250" key="1"/>
<evidence type="ECO:0000256" key="2">
    <source>
        <dbReference type="SAM" id="MobiDB-lite"/>
    </source>
</evidence>
<evidence type="ECO:0000305" key="3"/>
<reference key="1">
    <citation type="journal article" date="2005" name="PLoS Biol.">
        <title>The genomes of Oryza sativa: a history of duplications.</title>
        <authorList>
            <person name="Yu J."/>
            <person name="Wang J."/>
            <person name="Lin W."/>
            <person name="Li S."/>
            <person name="Li H."/>
            <person name="Zhou J."/>
            <person name="Ni P."/>
            <person name="Dong W."/>
            <person name="Hu S."/>
            <person name="Zeng C."/>
            <person name="Zhang J."/>
            <person name="Zhang Y."/>
            <person name="Li R."/>
            <person name="Xu Z."/>
            <person name="Li S."/>
            <person name="Li X."/>
            <person name="Zheng H."/>
            <person name="Cong L."/>
            <person name="Lin L."/>
            <person name="Yin J."/>
            <person name="Geng J."/>
            <person name="Li G."/>
            <person name="Shi J."/>
            <person name="Liu J."/>
            <person name="Lv H."/>
            <person name="Li J."/>
            <person name="Wang J."/>
            <person name="Deng Y."/>
            <person name="Ran L."/>
            <person name="Shi X."/>
            <person name="Wang X."/>
            <person name="Wu Q."/>
            <person name="Li C."/>
            <person name="Ren X."/>
            <person name="Wang J."/>
            <person name="Wang X."/>
            <person name="Li D."/>
            <person name="Liu D."/>
            <person name="Zhang X."/>
            <person name="Ji Z."/>
            <person name="Zhao W."/>
            <person name="Sun Y."/>
            <person name="Zhang Z."/>
            <person name="Bao J."/>
            <person name="Han Y."/>
            <person name="Dong L."/>
            <person name="Ji J."/>
            <person name="Chen P."/>
            <person name="Wu S."/>
            <person name="Liu J."/>
            <person name="Xiao Y."/>
            <person name="Bu D."/>
            <person name="Tan J."/>
            <person name="Yang L."/>
            <person name="Ye C."/>
            <person name="Zhang J."/>
            <person name="Xu J."/>
            <person name="Zhou Y."/>
            <person name="Yu Y."/>
            <person name="Zhang B."/>
            <person name="Zhuang S."/>
            <person name="Wei H."/>
            <person name="Liu B."/>
            <person name="Lei M."/>
            <person name="Yu H."/>
            <person name="Li Y."/>
            <person name="Xu H."/>
            <person name="Wei S."/>
            <person name="He X."/>
            <person name="Fang L."/>
            <person name="Zhang Z."/>
            <person name="Zhang Y."/>
            <person name="Huang X."/>
            <person name="Su Z."/>
            <person name="Tong W."/>
            <person name="Li J."/>
            <person name="Tong Z."/>
            <person name="Li S."/>
            <person name="Ye J."/>
            <person name="Wang L."/>
            <person name="Fang L."/>
            <person name="Lei T."/>
            <person name="Chen C.-S."/>
            <person name="Chen H.-C."/>
            <person name="Xu Z."/>
            <person name="Li H."/>
            <person name="Huang H."/>
            <person name="Zhang F."/>
            <person name="Xu H."/>
            <person name="Li N."/>
            <person name="Zhao C."/>
            <person name="Li S."/>
            <person name="Dong L."/>
            <person name="Huang Y."/>
            <person name="Li L."/>
            <person name="Xi Y."/>
            <person name="Qi Q."/>
            <person name="Li W."/>
            <person name="Zhang B."/>
            <person name="Hu W."/>
            <person name="Zhang Y."/>
            <person name="Tian X."/>
            <person name="Jiao Y."/>
            <person name="Liang X."/>
            <person name="Jin J."/>
            <person name="Gao L."/>
            <person name="Zheng W."/>
            <person name="Hao B."/>
            <person name="Liu S.-M."/>
            <person name="Wang W."/>
            <person name="Yuan L."/>
            <person name="Cao M."/>
            <person name="McDermott J."/>
            <person name="Samudrala R."/>
            <person name="Wang J."/>
            <person name="Wong G.K.-S."/>
            <person name="Yang H."/>
        </authorList>
    </citation>
    <scope>NUCLEOTIDE SEQUENCE [LARGE SCALE GENOMIC DNA]</scope>
    <source>
        <strain>cv. 93-11</strain>
    </source>
</reference>
<sequence>MAPKAEKKPAAKKPAEEEPAAEKAEKAPAGKKPKAEKRLPAGKGEKGSGEGKKAGRKKGKKSVETYKIYIFKVLKQVHPDIGISSKAMSIMNSFINDIFEKLAGESAKLARYNKKPTITSREIQTAVRLVLPGELAKHAVSEGTKAVTKFTSS</sequence>
<accession>A2WKT1</accession>
<name>H2B6_ORYSI</name>
<dbReference type="EMBL" id="CM000126">
    <property type="protein sequence ID" value="EAY72577.1"/>
    <property type="molecule type" value="Genomic_DNA"/>
</dbReference>
<dbReference type="SMR" id="A2WKT1"/>
<dbReference type="STRING" id="39946.A2WKT1"/>
<dbReference type="EnsemblPlants" id="BGIOSGA002377-TA">
    <property type="protein sequence ID" value="BGIOSGA002377-PA"/>
    <property type="gene ID" value="BGIOSGA002377"/>
</dbReference>
<dbReference type="EnsemblPlants" id="OsGoSa_01g0003790.01">
    <property type="protein sequence ID" value="OsGoSa_01g0003790.01"/>
    <property type="gene ID" value="OsGoSa_01g0003790"/>
</dbReference>
<dbReference type="EnsemblPlants" id="OsIR64_01g0003710.01">
    <property type="protein sequence ID" value="OsIR64_01g0003710.01"/>
    <property type="gene ID" value="OsIR64_01g0003710"/>
</dbReference>
<dbReference type="EnsemblPlants" id="OsKYG_01g0003640.01">
    <property type="protein sequence ID" value="OsKYG_01g0003640.01"/>
    <property type="gene ID" value="OsKYG_01g0003640"/>
</dbReference>
<dbReference type="EnsemblPlants" id="OsLaMu_01g0003690.01">
    <property type="protein sequence ID" value="OsLaMu_01g0003690.01"/>
    <property type="gene ID" value="OsLaMu_01g0003690"/>
</dbReference>
<dbReference type="EnsemblPlants" id="OsLima_01g0003520.01">
    <property type="protein sequence ID" value="OsLima_01g0003520.01"/>
    <property type="gene ID" value="OsLima_01g0003520"/>
</dbReference>
<dbReference type="EnsemblPlants" id="OsLiXu_01g0003760.01">
    <property type="protein sequence ID" value="OsLiXu_01g0003760.01"/>
    <property type="gene ID" value="OsLiXu_01g0003760"/>
</dbReference>
<dbReference type="EnsemblPlants" id="OsLiXu_Ung0004930.01">
    <property type="protein sequence ID" value="OsLiXu_Ung0004930.01"/>
    <property type="gene ID" value="OsLiXu_Ung0004930"/>
</dbReference>
<dbReference type="EnsemblPlants" id="OsMH63_01G003840_01">
    <property type="protein sequence ID" value="OsMH63_01G003840_01"/>
    <property type="gene ID" value="OsMH63_01G003840"/>
</dbReference>
<dbReference type="EnsemblPlants" id="OsPr106_01g0003750.01">
    <property type="protein sequence ID" value="OsPr106_01g0003750.01"/>
    <property type="gene ID" value="OsPr106_01g0003750"/>
</dbReference>
<dbReference type="EnsemblPlants" id="OsZS97_01G003610_01">
    <property type="protein sequence ID" value="OsZS97_01G003610_01"/>
    <property type="gene ID" value="OsZS97_01G003610"/>
</dbReference>
<dbReference type="Gramene" id="BGIOSGA002377-TA">
    <property type="protein sequence ID" value="BGIOSGA002377-PA"/>
    <property type="gene ID" value="BGIOSGA002377"/>
</dbReference>
<dbReference type="Gramene" id="OsGoSa_01g0003790.01">
    <property type="protein sequence ID" value="OsGoSa_01g0003790.01"/>
    <property type="gene ID" value="OsGoSa_01g0003790"/>
</dbReference>
<dbReference type="Gramene" id="OsIR64_01g0003710.01">
    <property type="protein sequence ID" value="OsIR64_01g0003710.01"/>
    <property type="gene ID" value="OsIR64_01g0003710"/>
</dbReference>
<dbReference type="Gramene" id="OsKYG_01g0003640.01">
    <property type="protein sequence ID" value="OsKYG_01g0003640.01"/>
    <property type="gene ID" value="OsKYG_01g0003640"/>
</dbReference>
<dbReference type="Gramene" id="OsLaMu_01g0003690.01">
    <property type="protein sequence ID" value="OsLaMu_01g0003690.01"/>
    <property type="gene ID" value="OsLaMu_01g0003690"/>
</dbReference>
<dbReference type="Gramene" id="OsLima_01g0003520.01">
    <property type="protein sequence ID" value="OsLima_01g0003520.01"/>
    <property type="gene ID" value="OsLima_01g0003520"/>
</dbReference>
<dbReference type="Gramene" id="OsLiXu_01g0003760.01">
    <property type="protein sequence ID" value="OsLiXu_01g0003760.01"/>
    <property type="gene ID" value="OsLiXu_01g0003760"/>
</dbReference>
<dbReference type="Gramene" id="OsLiXu_Ung0004930.01">
    <property type="protein sequence ID" value="OsLiXu_Ung0004930.01"/>
    <property type="gene ID" value="OsLiXu_Ung0004930"/>
</dbReference>
<dbReference type="Gramene" id="OsMH63_01G003840_01">
    <property type="protein sequence ID" value="OsMH63_01G003840_01"/>
    <property type="gene ID" value="OsMH63_01G003840"/>
</dbReference>
<dbReference type="Gramene" id="OsPr106_01g0003750.01">
    <property type="protein sequence ID" value="OsPr106_01g0003750.01"/>
    <property type="gene ID" value="OsPr106_01g0003750"/>
</dbReference>
<dbReference type="Gramene" id="OsZS97_01G003610_01">
    <property type="protein sequence ID" value="OsZS97_01G003610_01"/>
    <property type="gene ID" value="OsZS97_01G003610"/>
</dbReference>
<dbReference type="HOGENOM" id="CLU_075666_1_0_1"/>
<dbReference type="OMA" id="KSCRKES"/>
<dbReference type="OrthoDB" id="1914959at2759"/>
<dbReference type="Proteomes" id="UP000007015">
    <property type="component" value="Chromosome 1"/>
</dbReference>
<dbReference type="GO" id="GO:0000786">
    <property type="term" value="C:nucleosome"/>
    <property type="evidence" value="ECO:0007669"/>
    <property type="project" value="UniProtKB-KW"/>
</dbReference>
<dbReference type="GO" id="GO:0005634">
    <property type="term" value="C:nucleus"/>
    <property type="evidence" value="ECO:0007669"/>
    <property type="project" value="UniProtKB-SubCell"/>
</dbReference>
<dbReference type="GO" id="GO:0003677">
    <property type="term" value="F:DNA binding"/>
    <property type="evidence" value="ECO:0007669"/>
    <property type="project" value="UniProtKB-KW"/>
</dbReference>
<dbReference type="GO" id="GO:0046982">
    <property type="term" value="F:protein heterodimerization activity"/>
    <property type="evidence" value="ECO:0007669"/>
    <property type="project" value="InterPro"/>
</dbReference>
<dbReference type="GO" id="GO:0030527">
    <property type="term" value="F:structural constituent of chromatin"/>
    <property type="evidence" value="ECO:0007669"/>
    <property type="project" value="InterPro"/>
</dbReference>
<dbReference type="CDD" id="cd22910">
    <property type="entry name" value="HFD_H2B"/>
    <property type="match status" value="1"/>
</dbReference>
<dbReference type="FunFam" id="1.10.20.10:FF:000014">
    <property type="entry name" value="Histone H2B"/>
    <property type="match status" value="1"/>
</dbReference>
<dbReference type="Gene3D" id="1.10.20.10">
    <property type="entry name" value="Histone, subunit A"/>
    <property type="match status" value="1"/>
</dbReference>
<dbReference type="InterPro" id="IPR009072">
    <property type="entry name" value="Histone-fold"/>
</dbReference>
<dbReference type="InterPro" id="IPR007125">
    <property type="entry name" value="Histone_H2A/H2B/H3"/>
</dbReference>
<dbReference type="InterPro" id="IPR000558">
    <property type="entry name" value="Histone_H2B"/>
</dbReference>
<dbReference type="InterPro" id="IPR055333">
    <property type="entry name" value="HISTONE_H2B_site"/>
</dbReference>
<dbReference type="PANTHER" id="PTHR23428">
    <property type="entry name" value="HISTONE H2B"/>
    <property type="match status" value="1"/>
</dbReference>
<dbReference type="Pfam" id="PF00125">
    <property type="entry name" value="Histone"/>
    <property type="match status" value="1"/>
</dbReference>
<dbReference type="PRINTS" id="PR00621">
    <property type="entry name" value="HISTONEH2B"/>
</dbReference>
<dbReference type="SMART" id="SM00427">
    <property type="entry name" value="H2B"/>
    <property type="match status" value="1"/>
</dbReference>
<dbReference type="SUPFAM" id="SSF47113">
    <property type="entry name" value="Histone-fold"/>
    <property type="match status" value="1"/>
</dbReference>
<dbReference type="PROSITE" id="PS00357">
    <property type="entry name" value="HISTONE_H2B"/>
    <property type="match status" value="1"/>
</dbReference>
<organism>
    <name type="scientific">Oryza sativa subsp. indica</name>
    <name type="common">Rice</name>
    <dbReference type="NCBI Taxonomy" id="39946"/>
    <lineage>
        <taxon>Eukaryota</taxon>
        <taxon>Viridiplantae</taxon>
        <taxon>Streptophyta</taxon>
        <taxon>Embryophyta</taxon>
        <taxon>Tracheophyta</taxon>
        <taxon>Spermatophyta</taxon>
        <taxon>Magnoliopsida</taxon>
        <taxon>Liliopsida</taxon>
        <taxon>Poales</taxon>
        <taxon>Poaceae</taxon>
        <taxon>BOP clade</taxon>
        <taxon>Oryzoideae</taxon>
        <taxon>Oryzeae</taxon>
        <taxon>Oryzinae</taxon>
        <taxon>Oryza</taxon>
        <taxon>Oryza sativa</taxon>
    </lineage>
</organism>
<feature type="initiator methionine" description="Removed" evidence="1">
    <location>
        <position position="1"/>
    </location>
</feature>
<feature type="chain" id="PRO_0000294186" description="Histone H2B.6">
    <location>
        <begin position="2"/>
        <end position="153"/>
    </location>
</feature>
<feature type="region of interest" description="Disordered" evidence="2">
    <location>
        <begin position="1"/>
        <end position="60"/>
    </location>
</feature>
<feature type="compositionally biased region" description="Basic and acidic residues" evidence="2">
    <location>
        <begin position="1"/>
        <end position="28"/>
    </location>
</feature>
<feature type="compositionally biased region" description="Basic and acidic residues" evidence="2">
    <location>
        <begin position="36"/>
        <end position="53"/>
    </location>
</feature>
<feature type="modified residue" description="N6-acetyllysine" evidence="1">
    <location>
        <position position="7"/>
    </location>
</feature>
<feature type="modified residue" description="N6-acetyllysine" evidence="1">
    <location>
        <position position="37"/>
    </location>
</feature>
<feature type="cross-link" description="Glycyl lysine isopeptide (Lys-Gly) (interchain with G-Cter in ubiquitin)" evidence="1">
    <location>
        <position position="149"/>
    </location>
</feature>
<keyword id="KW-0007">Acetylation</keyword>
<keyword id="KW-0158">Chromosome</keyword>
<keyword id="KW-0238">DNA-binding</keyword>
<keyword id="KW-1017">Isopeptide bond</keyword>
<keyword id="KW-0544">Nucleosome core</keyword>
<keyword id="KW-0539">Nucleus</keyword>
<keyword id="KW-1185">Reference proteome</keyword>
<keyword id="KW-0832">Ubl conjugation</keyword>
<gene>
    <name type="primary">H2B.6</name>
    <name type="ORF">OsI_000424</name>
</gene>
<protein>
    <recommendedName>
        <fullName>Histone H2B.6</fullName>
    </recommendedName>
</protein>
<proteinExistence type="inferred from homology"/>